<gene>
    <name evidence="1" type="primary">hprK</name>
    <name type="ordered locus">LA_2403</name>
</gene>
<proteinExistence type="inferred from homology"/>
<dbReference type="EC" id="2.7.11.-" evidence="1"/>
<dbReference type="EC" id="2.7.4.-" evidence="1"/>
<dbReference type="EMBL" id="AE010300">
    <property type="protein sequence ID" value="AAN49602.1"/>
    <property type="molecule type" value="Genomic_DNA"/>
</dbReference>
<dbReference type="RefSeq" id="NP_712584.1">
    <property type="nucleotide sequence ID" value="NC_004342.2"/>
</dbReference>
<dbReference type="RefSeq" id="WP_000062490.1">
    <property type="nucleotide sequence ID" value="NC_004342.2"/>
</dbReference>
<dbReference type="SMR" id="Q8F3J9"/>
<dbReference type="STRING" id="189518.LA_2403"/>
<dbReference type="PaxDb" id="189518-LA_2403"/>
<dbReference type="EnsemblBacteria" id="AAN49602">
    <property type="protein sequence ID" value="AAN49602"/>
    <property type="gene ID" value="LA_2403"/>
</dbReference>
<dbReference type="GeneID" id="61144845"/>
<dbReference type="KEGG" id="lil:LA_2403"/>
<dbReference type="PATRIC" id="fig|189518.3.peg.2382"/>
<dbReference type="HOGENOM" id="CLU_052030_0_1_12"/>
<dbReference type="InParanoid" id="Q8F3J9"/>
<dbReference type="OrthoDB" id="9778803at2"/>
<dbReference type="Proteomes" id="UP000001408">
    <property type="component" value="Chromosome I"/>
</dbReference>
<dbReference type="GO" id="GO:0005829">
    <property type="term" value="C:cytosol"/>
    <property type="evidence" value="ECO:0000318"/>
    <property type="project" value="GO_Central"/>
</dbReference>
<dbReference type="GO" id="GO:0005524">
    <property type="term" value="F:ATP binding"/>
    <property type="evidence" value="ECO:0007669"/>
    <property type="project" value="UniProtKB-UniRule"/>
</dbReference>
<dbReference type="GO" id="GO:0000287">
    <property type="term" value="F:magnesium ion binding"/>
    <property type="evidence" value="ECO:0007669"/>
    <property type="project" value="UniProtKB-UniRule"/>
</dbReference>
<dbReference type="GO" id="GO:0000155">
    <property type="term" value="F:phosphorelay sensor kinase activity"/>
    <property type="evidence" value="ECO:0007669"/>
    <property type="project" value="InterPro"/>
</dbReference>
<dbReference type="GO" id="GO:0004674">
    <property type="term" value="F:protein serine/threonine kinase activity"/>
    <property type="evidence" value="ECO:0007669"/>
    <property type="project" value="UniProtKB-KW"/>
</dbReference>
<dbReference type="GO" id="GO:0004712">
    <property type="term" value="F:protein serine/threonine/tyrosine kinase activity"/>
    <property type="evidence" value="ECO:0007669"/>
    <property type="project" value="UniProtKB-UniRule"/>
</dbReference>
<dbReference type="GO" id="GO:0006109">
    <property type="term" value="P:regulation of carbohydrate metabolic process"/>
    <property type="evidence" value="ECO:0007669"/>
    <property type="project" value="UniProtKB-UniRule"/>
</dbReference>
<dbReference type="CDD" id="cd01918">
    <property type="entry name" value="HprK_C"/>
    <property type="match status" value="1"/>
</dbReference>
<dbReference type="FunFam" id="3.40.1390.20:FF:000006">
    <property type="entry name" value="HPr kinase/phosphorylase"/>
    <property type="match status" value="1"/>
</dbReference>
<dbReference type="FunFam" id="3.40.50.300:FF:000174">
    <property type="entry name" value="HPr kinase/phosphorylase"/>
    <property type="match status" value="1"/>
</dbReference>
<dbReference type="Gene3D" id="3.40.1390.20">
    <property type="entry name" value="HprK N-terminal domain-like"/>
    <property type="match status" value="1"/>
</dbReference>
<dbReference type="Gene3D" id="3.40.50.300">
    <property type="entry name" value="P-loop containing nucleotide triphosphate hydrolases"/>
    <property type="match status" value="1"/>
</dbReference>
<dbReference type="HAMAP" id="MF_01249">
    <property type="entry name" value="HPr_kinase"/>
    <property type="match status" value="1"/>
</dbReference>
<dbReference type="InterPro" id="IPR003755">
    <property type="entry name" value="HPr(Ser)_kin/Pase"/>
</dbReference>
<dbReference type="InterPro" id="IPR011104">
    <property type="entry name" value="Hpr_kin/Pase_C"/>
</dbReference>
<dbReference type="InterPro" id="IPR011126">
    <property type="entry name" value="Hpr_kin/Pase_Hpr_N"/>
</dbReference>
<dbReference type="InterPro" id="IPR027417">
    <property type="entry name" value="P-loop_NTPase"/>
</dbReference>
<dbReference type="InterPro" id="IPR028979">
    <property type="entry name" value="Ser_kin/Pase_Hpr-like_N_sf"/>
</dbReference>
<dbReference type="NCBIfam" id="TIGR00679">
    <property type="entry name" value="hpr-ser"/>
    <property type="match status" value="1"/>
</dbReference>
<dbReference type="PANTHER" id="PTHR30305:SF1">
    <property type="entry name" value="HPR KINASE_PHOSPHORYLASE"/>
    <property type="match status" value="1"/>
</dbReference>
<dbReference type="PANTHER" id="PTHR30305">
    <property type="entry name" value="PROTEIN YJDM-RELATED"/>
    <property type="match status" value="1"/>
</dbReference>
<dbReference type="Pfam" id="PF07475">
    <property type="entry name" value="Hpr_kinase_C"/>
    <property type="match status" value="1"/>
</dbReference>
<dbReference type="Pfam" id="PF02603">
    <property type="entry name" value="Hpr_kinase_N"/>
    <property type="match status" value="1"/>
</dbReference>
<dbReference type="SUPFAM" id="SSF75138">
    <property type="entry name" value="HprK N-terminal domain-like"/>
    <property type="match status" value="1"/>
</dbReference>
<dbReference type="SUPFAM" id="SSF53795">
    <property type="entry name" value="PEP carboxykinase-like"/>
    <property type="match status" value="1"/>
</dbReference>
<organism>
    <name type="scientific">Leptospira interrogans serogroup Icterohaemorrhagiae serovar Lai (strain 56601)</name>
    <dbReference type="NCBI Taxonomy" id="189518"/>
    <lineage>
        <taxon>Bacteria</taxon>
        <taxon>Pseudomonadati</taxon>
        <taxon>Spirochaetota</taxon>
        <taxon>Spirochaetia</taxon>
        <taxon>Leptospirales</taxon>
        <taxon>Leptospiraceae</taxon>
        <taxon>Leptospira</taxon>
    </lineage>
</organism>
<feature type="chain" id="PRO_0000058965" description="HPr kinase/phosphorylase">
    <location>
        <begin position="1"/>
        <end position="321"/>
    </location>
</feature>
<feature type="region of interest" description="Important for the catalytic mechanism of both phosphorylation and dephosphorylation" evidence="1">
    <location>
        <begin position="206"/>
        <end position="215"/>
    </location>
</feature>
<feature type="region of interest" description="Important for the catalytic mechanism of dephosphorylation" evidence="1">
    <location>
        <begin position="269"/>
        <end position="274"/>
    </location>
</feature>
<feature type="active site" evidence="1">
    <location>
        <position position="143"/>
    </location>
</feature>
<feature type="active site" evidence="1">
    <location>
        <position position="164"/>
    </location>
</feature>
<feature type="active site" description="Proton acceptor; for phosphorylation activity. Proton donor; for dephosphorylation activity" evidence="1">
    <location>
        <position position="182"/>
    </location>
</feature>
<feature type="active site" evidence="1">
    <location>
        <position position="248"/>
    </location>
</feature>
<feature type="binding site" evidence="1">
    <location>
        <begin position="158"/>
        <end position="165"/>
    </location>
    <ligand>
        <name>ATP</name>
        <dbReference type="ChEBI" id="CHEBI:30616"/>
    </ligand>
</feature>
<feature type="binding site" evidence="1">
    <location>
        <position position="165"/>
    </location>
    <ligand>
        <name>Mg(2+)</name>
        <dbReference type="ChEBI" id="CHEBI:18420"/>
    </ligand>
</feature>
<feature type="binding site" evidence="1">
    <location>
        <position position="207"/>
    </location>
    <ligand>
        <name>Mg(2+)</name>
        <dbReference type="ChEBI" id="CHEBI:18420"/>
    </ligand>
</feature>
<evidence type="ECO:0000255" key="1">
    <source>
        <dbReference type="HAMAP-Rule" id="MF_01249"/>
    </source>
</evidence>
<accession>Q8F3J9</accession>
<reference key="1">
    <citation type="journal article" date="2003" name="Nature">
        <title>Unique physiological and pathogenic features of Leptospira interrogans revealed by whole-genome sequencing.</title>
        <authorList>
            <person name="Ren S.-X."/>
            <person name="Fu G."/>
            <person name="Jiang X.-G."/>
            <person name="Zeng R."/>
            <person name="Miao Y.-G."/>
            <person name="Xu H."/>
            <person name="Zhang Y.-X."/>
            <person name="Xiong H."/>
            <person name="Lu G."/>
            <person name="Lu L.-F."/>
            <person name="Jiang H.-Q."/>
            <person name="Jia J."/>
            <person name="Tu Y.-F."/>
            <person name="Jiang J.-X."/>
            <person name="Gu W.-Y."/>
            <person name="Zhang Y.-Q."/>
            <person name="Cai Z."/>
            <person name="Sheng H.-H."/>
            <person name="Yin H.-F."/>
            <person name="Zhang Y."/>
            <person name="Zhu G.-F."/>
            <person name="Wan M."/>
            <person name="Huang H.-L."/>
            <person name="Qian Z."/>
            <person name="Wang S.-Y."/>
            <person name="Ma W."/>
            <person name="Yao Z.-J."/>
            <person name="Shen Y."/>
            <person name="Qiang B.-Q."/>
            <person name="Xia Q.-C."/>
            <person name="Guo X.-K."/>
            <person name="Danchin A."/>
            <person name="Saint Girons I."/>
            <person name="Somerville R.L."/>
            <person name="Wen Y.-M."/>
            <person name="Shi M.-H."/>
            <person name="Chen Z."/>
            <person name="Xu J.-G."/>
            <person name="Zhao G.-P."/>
        </authorList>
    </citation>
    <scope>NUCLEOTIDE SEQUENCE [LARGE SCALE GENOMIC DNA]</scope>
    <source>
        <strain>56601</strain>
    </source>
</reference>
<name>HPRK_LEPIN</name>
<protein>
    <recommendedName>
        <fullName evidence="1">HPr kinase/phosphorylase</fullName>
        <shortName evidence="1">HPrK/P</shortName>
        <ecNumber evidence="1">2.7.11.-</ecNumber>
        <ecNumber evidence="1">2.7.4.-</ecNumber>
    </recommendedName>
    <alternativeName>
        <fullName evidence="1">HPr(Ser) kinase/phosphorylase</fullName>
    </alternativeName>
</protein>
<sequence length="321" mass="36119">MSMPGINVSNLLNEHEELGLRLLAGQKGLTNRINMSEINRPGLSLTGFYESFAHDRIQIFGKGEWAYITSRTPEDLEKIAAEFFGFHLNCIIFTHGNMPPPIFMENCEKLGIPLMISEVSTHKFITLISGILDRSLAPRTMRHGVLIEVFGIGILLSGKSGVGKSETALELIERGHRLVADDMVEIRRLSESYLIGTCSDLLRHHMEIRGLGILNIKDIFGIGSVRDHKLIELIIHLEEWTEGKDFDRTGLENPTEELLGVQIPLIRVPVRPGRNIPIIVETAAMNQRLRKLGKNAAQEFNQKLSQYLQQGKVERNPTQNQ</sequence>
<keyword id="KW-0067">ATP-binding</keyword>
<keyword id="KW-0418">Kinase</keyword>
<keyword id="KW-0460">Magnesium</keyword>
<keyword id="KW-0479">Metal-binding</keyword>
<keyword id="KW-0511">Multifunctional enzyme</keyword>
<keyword id="KW-0547">Nucleotide-binding</keyword>
<keyword id="KW-1185">Reference proteome</keyword>
<keyword id="KW-0723">Serine/threonine-protein kinase</keyword>
<keyword id="KW-0808">Transferase</keyword>
<comment type="function">
    <text evidence="1">Catalyzes the ATP- as well as the pyrophosphate-dependent phosphorylation of a specific serine residue in HPr, a phosphocarrier protein of the phosphoenolpyruvate-dependent sugar phosphotransferase system (PTS). HprK/P also catalyzes the pyrophosphate-producing, inorganic phosphate-dependent dephosphorylation (phosphorolysis) of seryl-phosphorylated HPr (P-Ser-HPr).</text>
</comment>
<comment type="catalytic activity">
    <reaction evidence="1">
        <text>[HPr protein]-L-serine + ATP = [HPr protein]-O-phospho-L-serine + ADP + H(+)</text>
        <dbReference type="Rhea" id="RHEA:46600"/>
        <dbReference type="Rhea" id="RHEA-COMP:11602"/>
        <dbReference type="Rhea" id="RHEA-COMP:11603"/>
        <dbReference type="ChEBI" id="CHEBI:15378"/>
        <dbReference type="ChEBI" id="CHEBI:29999"/>
        <dbReference type="ChEBI" id="CHEBI:30616"/>
        <dbReference type="ChEBI" id="CHEBI:83421"/>
        <dbReference type="ChEBI" id="CHEBI:456216"/>
    </reaction>
</comment>
<comment type="catalytic activity">
    <reaction evidence="1">
        <text>[HPr protein]-O-phospho-L-serine + phosphate + H(+) = [HPr protein]-L-serine + diphosphate</text>
        <dbReference type="Rhea" id="RHEA:46604"/>
        <dbReference type="Rhea" id="RHEA-COMP:11602"/>
        <dbReference type="Rhea" id="RHEA-COMP:11603"/>
        <dbReference type="ChEBI" id="CHEBI:15378"/>
        <dbReference type="ChEBI" id="CHEBI:29999"/>
        <dbReference type="ChEBI" id="CHEBI:33019"/>
        <dbReference type="ChEBI" id="CHEBI:43474"/>
        <dbReference type="ChEBI" id="CHEBI:83421"/>
    </reaction>
</comment>
<comment type="cofactor">
    <cofactor evidence="1">
        <name>Mg(2+)</name>
        <dbReference type="ChEBI" id="CHEBI:18420"/>
    </cofactor>
</comment>
<comment type="subunit">
    <text evidence="1">Homohexamer.</text>
</comment>
<comment type="domain">
    <text evidence="1">The Walker A ATP-binding motif also binds Pi and PPi.</text>
</comment>
<comment type="miscellaneous">
    <text evidence="1">Both phosphorylation and phosphorolysis are carried out by the same active site and suggest a common mechanism for both reactions.</text>
</comment>
<comment type="similarity">
    <text evidence="1">Belongs to the HPrK/P family.</text>
</comment>